<organism>
    <name type="scientific">Cryptococcus neoformans var. neoformans serotype D (strain B-3501A)</name>
    <name type="common">Filobasidiella neoformans</name>
    <dbReference type="NCBI Taxonomy" id="283643"/>
    <lineage>
        <taxon>Eukaryota</taxon>
        <taxon>Fungi</taxon>
        <taxon>Dikarya</taxon>
        <taxon>Basidiomycota</taxon>
        <taxon>Agaricomycotina</taxon>
        <taxon>Tremellomycetes</taxon>
        <taxon>Tremellales</taxon>
        <taxon>Cryptococcaceae</taxon>
        <taxon>Cryptococcus</taxon>
        <taxon>Cryptococcus neoformans species complex</taxon>
    </lineage>
</organism>
<proteinExistence type="inferred from homology"/>
<sequence>MRFHLGLTEALQEREPNINASSKDLSLLHFELYRRSEPIMDIDEESYLNAGPSAPSKIPQGGEGDGLQGMSKKAMKRAAKQARLEEIKPLKRAAERERRRQRTAQLAEGYAAGTLSEADKELVERRRRVEKERKEAQRRIESGDQANDWLGGVVIDLGFDDLMTDQEIASMAQQLGYLYSSNRTAEKPVRTVIHTTFSPAASPRLWQRMENFNWHKWSRCHWWEQGLETLKSQLDPSTSILSVQSVVSKETQDKAGIDTKSLLSRLTGPQVPVDLQAGKHKLVYLSADAEDELLSLSEDEIYIIGGIVDRNRHKNLCQGKAEQLGIRTARLPIGTFLEMLPTRKALTVNQVFDILVKYLHLGDWAAAFEAVIPIRKYAPGRKAKRAKTETKRNEKVEEEVECTSAEGEEDIGVIEESAEVDPEDVFSNQ</sequence>
<protein>
    <recommendedName>
        <fullName evidence="2">tRNA (guanine(9)-N1)-methyltransferase</fullName>
        <ecNumber evidence="2">2.1.1.221</ecNumber>
    </recommendedName>
    <alternativeName>
        <fullName evidence="2">tRNA methyltransferase 10</fullName>
    </alternativeName>
    <alternativeName>
        <fullName evidence="2">tRNA(m1G9)-methyltransferase</fullName>
        <shortName evidence="2">tRNA(m1G9)MTase</shortName>
    </alternativeName>
</protein>
<name>TRM10_CRYNB</name>
<gene>
    <name evidence="2" type="primary">TRM10</name>
    <name type="ordered locus">CNBC2000</name>
</gene>
<accession>P0CS11</accession>
<accession>Q55WD7</accession>
<accession>Q5KJW1</accession>
<reference key="1">
    <citation type="journal article" date="2005" name="Science">
        <title>The genome of the basidiomycetous yeast and human pathogen Cryptococcus neoformans.</title>
        <authorList>
            <person name="Loftus B.J."/>
            <person name="Fung E."/>
            <person name="Roncaglia P."/>
            <person name="Rowley D."/>
            <person name="Amedeo P."/>
            <person name="Bruno D."/>
            <person name="Vamathevan J."/>
            <person name="Miranda M."/>
            <person name="Anderson I.J."/>
            <person name="Fraser J.A."/>
            <person name="Allen J.E."/>
            <person name="Bosdet I.E."/>
            <person name="Brent M.R."/>
            <person name="Chiu R."/>
            <person name="Doering T.L."/>
            <person name="Donlin M.J."/>
            <person name="D'Souza C.A."/>
            <person name="Fox D.S."/>
            <person name="Grinberg V."/>
            <person name="Fu J."/>
            <person name="Fukushima M."/>
            <person name="Haas B.J."/>
            <person name="Huang J.C."/>
            <person name="Janbon G."/>
            <person name="Jones S.J.M."/>
            <person name="Koo H.L."/>
            <person name="Krzywinski M.I."/>
            <person name="Kwon-Chung K.J."/>
            <person name="Lengeler K.B."/>
            <person name="Maiti R."/>
            <person name="Marra M.A."/>
            <person name="Marra R.E."/>
            <person name="Mathewson C.A."/>
            <person name="Mitchell T.G."/>
            <person name="Pertea M."/>
            <person name="Riggs F.R."/>
            <person name="Salzberg S.L."/>
            <person name="Schein J.E."/>
            <person name="Shvartsbeyn A."/>
            <person name="Shin H."/>
            <person name="Shumway M."/>
            <person name="Specht C.A."/>
            <person name="Suh B.B."/>
            <person name="Tenney A."/>
            <person name="Utterback T.R."/>
            <person name="Wickes B.L."/>
            <person name="Wortman J.R."/>
            <person name="Wye N.H."/>
            <person name="Kronstad J.W."/>
            <person name="Lodge J.K."/>
            <person name="Heitman J."/>
            <person name="Davis R.W."/>
            <person name="Fraser C.M."/>
            <person name="Hyman R.W."/>
        </authorList>
    </citation>
    <scope>NUCLEOTIDE SEQUENCE [LARGE SCALE GENOMIC DNA]</scope>
    <source>
        <strain>B-3501A</strain>
    </source>
</reference>
<feature type="chain" id="PRO_0000410318" description="tRNA (guanine(9)-N1)-methyltransferase">
    <location>
        <begin position="1"/>
        <end position="429"/>
    </location>
</feature>
<feature type="domain" description="SAM-dependent MTase TRM10-type" evidence="3">
    <location>
        <begin position="131"/>
        <end position="379"/>
    </location>
</feature>
<feature type="region of interest" description="Disordered" evidence="4">
    <location>
        <begin position="383"/>
        <end position="429"/>
    </location>
</feature>
<feature type="compositionally biased region" description="Basic and acidic residues" evidence="4">
    <location>
        <begin position="386"/>
        <end position="395"/>
    </location>
</feature>
<feature type="compositionally biased region" description="Acidic residues" evidence="4">
    <location>
        <begin position="396"/>
        <end position="429"/>
    </location>
</feature>
<feature type="active site" description="Proton acceptor" evidence="1">
    <location>
        <position position="309"/>
    </location>
</feature>
<feature type="binding site" evidence="2">
    <location>
        <begin position="285"/>
        <end position="286"/>
    </location>
    <ligand>
        <name>S-adenosyl-L-methionine</name>
        <dbReference type="ChEBI" id="CHEBI:59789"/>
    </ligand>
</feature>
<feature type="binding site" evidence="2">
    <location>
        <position position="305"/>
    </location>
    <ligand>
        <name>S-adenosyl-L-methionine</name>
        <dbReference type="ChEBI" id="CHEBI:59789"/>
    </ligand>
</feature>
<feature type="binding site" evidence="2">
    <location>
        <begin position="309"/>
        <end position="313"/>
    </location>
    <ligand>
        <name>S-adenosyl-L-methionine</name>
        <dbReference type="ChEBI" id="CHEBI:59789"/>
    </ligand>
</feature>
<feature type="binding site" evidence="2">
    <location>
        <position position="317"/>
    </location>
    <ligand>
        <name>S-adenosyl-L-methionine</name>
        <dbReference type="ChEBI" id="CHEBI:59789"/>
    </ligand>
</feature>
<feature type="binding site" evidence="2">
    <location>
        <position position="331"/>
    </location>
    <ligand>
        <name>S-adenosyl-L-methionine</name>
        <dbReference type="ChEBI" id="CHEBI:59789"/>
    </ligand>
</feature>
<feature type="binding site" evidence="2">
    <location>
        <begin position="344"/>
        <end position="346"/>
    </location>
    <ligand>
        <name>S-adenosyl-L-methionine</name>
        <dbReference type="ChEBI" id="CHEBI:59789"/>
    </ligand>
</feature>
<keyword id="KW-0963">Cytoplasm</keyword>
<keyword id="KW-0489">Methyltransferase</keyword>
<keyword id="KW-0539">Nucleus</keyword>
<keyword id="KW-0949">S-adenosyl-L-methionine</keyword>
<keyword id="KW-0808">Transferase</keyword>
<keyword id="KW-0819">tRNA processing</keyword>
<dbReference type="EC" id="2.1.1.221" evidence="2"/>
<dbReference type="EMBL" id="AAEY01000013">
    <property type="protein sequence ID" value="EAL22062.1"/>
    <property type="molecule type" value="Genomic_DNA"/>
</dbReference>
<dbReference type="RefSeq" id="XP_776709.1">
    <property type="nucleotide sequence ID" value="XM_771616.1"/>
</dbReference>
<dbReference type="SMR" id="P0CS11"/>
<dbReference type="GeneID" id="4934865"/>
<dbReference type="KEGG" id="cnb:CNBC2000"/>
<dbReference type="VEuPathDB" id="FungiDB:CNBC2000"/>
<dbReference type="HOGENOM" id="CLU_034384_1_1_1"/>
<dbReference type="OrthoDB" id="8248at5206"/>
<dbReference type="GO" id="GO:0005737">
    <property type="term" value="C:cytoplasm"/>
    <property type="evidence" value="ECO:0007669"/>
    <property type="project" value="UniProtKB-SubCell"/>
</dbReference>
<dbReference type="GO" id="GO:0005634">
    <property type="term" value="C:nucleus"/>
    <property type="evidence" value="ECO:0007669"/>
    <property type="project" value="UniProtKB-SubCell"/>
</dbReference>
<dbReference type="GO" id="GO:0052905">
    <property type="term" value="F:tRNA (guanosine(9)-N1)-methyltransferase activity"/>
    <property type="evidence" value="ECO:0007669"/>
    <property type="project" value="UniProtKB-EC"/>
</dbReference>
<dbReference type="GO" id="GO:0000049">
    <property type="term" value="F:tRNA binding"/>
    <property type="evidence" value="ECO:0007669"/>
    <property type="project" value="TreeGrafter"/>
</dbReference>
<dbReference type="GO" id="GO:0002939">
    <property type="term" value="P:tRNA N1-guanine methylation"/>
    <property type="evidence" value="ECO:0007669"/>
    <property type="project" value="TreeGrafter"/>
</dbReference>
<dbReference type="CDD" id="cd18089">
    <property type="entry name" value="SPOUT_Trm10-like"/>
    <property type="match status" value="1"/>
</dbReference>
<dbReference type="Gene3D" id="3.40.1280.30">
    <property type="match status" value="1"/>
</dbReference>
<dbReference type="InterPro" id="IPR028564">
    <property type="entry name" value="MT_TRM10-typ"/>
</dbReference>
<dbReference type="InterPro" id="IPR038459">
    <property type="entry name" value="MT_TRM10-typ_sf"/>
</dbReference>
<dbReference type="InterPro" id="IPR007356">
    <property type="entry name" value="tRNA_m1G_MeTrfase_euk"/>
</dbReference>
<dbReference type="InterPro" id="IPR016009">
    <property type="entry name" value="tRNA_MeTrfase_TRMD/TRM10"/>
</dbReference>
<dbReference type="PANTHER" id="PTHR13563">
    <property type="entry name" value="TRNA (GUANINE-9-) METHYLTRANSFERASE"/>
    <property type="match status" value="1"/>
</dbReference>
<dbReference type="PANTHER" id="PTHR13563:SF13">
    <property type="entry name" value="TRNA METHYLTRANSFERASE 10 HOMOLOG A"/>
    <property type="match status" value="1"/>
</dbReference>
<dbReference type="Pfam" id="PF01746">
    <property type="entry name" value="tRNA_m1G_MT"/>
    <property type="match status" value="1"/>
</dbReference>
<dbReference type="PROSITE" id="PS51675">
    <property type="entry name" value="SAM_MT_TRM10"/>
    <property type="match status" value="1"/>
</dbReference>
<evidence type="ECO:0000250" key="1">
    <source>
        <dbReference type="UniProtKB" id="O14214"/>
    </source>
</evidence>
<evidence type="ECO:0000250" key="2">
    <source>
        <dbReference type="UniProtKB" id="Q12400"/>
    </source>
</evidence>
<evidence type="ECO:0000255" key="3">
    <source>
        <dbReference type="PROSITE-ProRule" id="PRU01012"/>
    </source>
</evidence>
<evidence type="ECO:0000256" key="4">
    <source>
        <dbReference type="SAM" id="MobiDB-lite"/>
    </source>
</evidence>
<comment type="function">
    <text evidence="2">S-adenosyl-L-methionine-dependent guanine N(1)-methyltransferase that catalyzes the formation of N(1)-methylguanine at position 9 (m1G9) in cytoplasmic tRNA.</text>
</comment>
<comment type="catalytic activity">
    <reaction evidence="2">
        <text>guanosine(9) in tRNA + S-adenosyl-L-methionine = N(1)-methylguanosine(9) in tRNA + S-adenosyl-L-homocysteine + H(+)</text>
        <dbReference type="Rhea" id="RHEA:43156"/>
        <dbReference type="Rhea" id="RHEA-COMP:10367"/>
        <dbReference type="Rhea" id="RHEA-COMP:10368"/>
        <dbReference type="ChEBI" id="CHEBI:15378"/>
        <dbReference type="ChEBI" id="CHEBI:57856"/>
        <dbReference type="ChEBI" id="CHEBI:59789"/>
        <dbReference type="ChEBI" id="CHEBI:73542"/>
        <dbReference type="ChEBI" id="CHEBI:74269"/>
        <dbReference type="EC" id="2.1.1.221"/>
    </reaction>
</comment>
<comment type="subunit">
    <text evidence="1">Monomer.</text>
</comment>
<comment type="subcellular location">
    <subcellularLocation>
        <location evidence="2">Cytoplasm</location>
    </subcellularLocation>
    <subcellularLocation>
        <location evidence="2">Nucleus</location>
    </subcellularLocation>
</comment>
<comment type="similarity">
    <text evidence="3">Belongs to the class IV-like SAM-binding methyltransferase superfamily. TRM10 family.</text>
</comment>